<comment type="function">
    <text evidence="1">E1-like activating enzyme involved in the 2 ubiquitin-like systems required for cytoplasm to vacuole transport (Cvt) and autophagy. Activates ATG12 for its conjugation with ATG5 and ATG8 for its conjugation with phosphatidylethanolamine. Both systems are needed for the ATG8 association to Cvt vesicles and autophagosomes membranes. Autophagy is essential for maintenance of amino acid levels and protein synthesis under nitrogen starvation. Required for selective autophagic degradation of the nucleus (nucleophagy) as well as for mitophagy which contributes to regulate mitochondrial quantity and quality by eliminating the mitochondria to a basal level to fulfill cellular energy requirements and preventing excess ROS production. Plays a role in the regulation of filamentous growth and chronological longevity (By similarity).</text>
</comment>
<comment type="subunit">
    <text evidence="1">Homodimer.</text>
</comment>
<comment type="subcellular location">
    <subcellularLocation>
        <location evidence="1">Cytoplasm</location>
    </subcellularLocation>
    <subcellularLocation>
        <location evidence="1">Preautophagosomal structure</location>
    </subcellularLocation>
</comment>
<comment type="domain">
    <text evidence="1">The GxGxxG motif is important for the function, possibly through binding with ATP.</text>
</comment>
<comment type="similarity">
    <text evidence="3">Belongs to the ATG7 family.</text>
</comment>
<comment type="sequence caution" evidence="3">
    <conflict type="erroneous initiation">
        <sequence resource="EMBL-CDS" id="AAW45433"/>
    </conflict>
    <text>Extended N-terminus.</text>
</comment>
<accession>P0CM38</accession>
<accession>Q55NS2</accession>
<accession>Q5KC57</accession>
<protein>
    <recommendedName>
        <fullName>Ubiquitin-like modifier-activating enzyme ATG7</fullName>
    </recommendedName>
    <alternativeName>
        <fullName>ATG12-activating enzyme E1 ATG7</fullName>
    </alternativeName>
    <alternativeName>
        <fullName>Autophagy-related protein 7</fullName>
    </alternativeName>
</protein>
<organism>
    <name type="scientific">Cryptococcus neoformans var. neoformans serotype D (strain JEC21 / ATCC MYA-565)</name>
    <name type="common">Filobasidiella neoformans</name>
    <dbReference type="NCBI Taxonomy" id="214684"/>
    <lineage>
        <taxon>Eukaryota</taxon>
        <taxon>Fungi</taxon>
        <taxon>Dikarya</taxon>
        <taxon>Basidiomycota</taxon>
        <taxon>Agaricomycotina</taxon>
        <taxon>Tremellomycetes</taxon>
        <taxon>Tremellales</taxon>
        <taxon>Cryptococcaceae</taxon>
        <taxon>Cryptococcus</taxon>
        <taxon>Cryptococcus neoformans species complex</taxon>
    </lineage>
</organism>
<proteinExistence type="inferred from homology"/>
<dbReference type="EMBL" id="AE017349">
    <property type="protein sequence ID" value="AAW45433.2"/>
    <property type="status" value="ALT_INIT"/>
    <property type="molecule type" value="Genomic_DNA"/>
</dbReference>
<dbReference type="RefSeq" id="XP_572740.1">
    <property type="nucleotide sequence ID" value="XM_572740.1"/>
</dbReference>
<dbReference type="SMR" id="P0CM38"/>
<dbReference type="FunCoup" id="P0CM38">
    <property type="interactions" value="337"/>
</dbReference>
<dbReference type="STRING" id="214684.P0CM38"/>
<dbReference type="PaxDb" id="214684-P0CM38"/>
<dbReference type="EnsemblFungi" id="AAW45433">
    <property type="protein sequence ID" value="AAW45433"/>
    <property type="gene ID" value="CNI00160"/>
</dbReference>
<dbReference type="GeneID" id="3259392"/>
<dbReference type="KEGG" id="cne:CNI00160"/>
<dbReference type="eggNOG" id="KOG2337">
    <property type="taxonomic scope" value="Eukaryota"/>
</dbReference>
<dbReference type="HOGENOM" id="CLU_012998_2_1_1"/>
<dbReference type="InParanoid" id="P0CM38"/>
<dbReference type="OMA" id="WSFYYWF"/>
<dbReference type="OrthoDB" id="338614at2759"/>
<dbReference type="PHI-base" id="PHI:9136"/>
<dbReference type="Proteomes" id="UP000002149">
    <property type="component" value="Chromosome 9"/>
</dbReference>
<dbReference type="GO" id="GO:0005737">
    <property type="term" value="C:cytoplasm"/>
    <property type="evidence" value="ECO:0000318"/>
    <property type="project" value="GO_Central"/>
</dbReference>
<dbReference type="GO" id="GO:0005829">
    <property type="term" value="C:cytosol"/>
    <property type="evidence" value="ECO:0007669"/>
    <property type="project" value="EnsemblFungi"/>
</dbReference>
<dbReference type="GO" id="GO:0097632">
    <property type="term" value="C:extrinsic component of phagophore assembly site membrane"/>
    <property type="evidence" value="ECO:0007669"/>
    <property type="project" value="EnsemblFungi"/>
</dbReference>
<dbReference type="GO" id="GO:0000407">
    <property type="term" value="C:phagophore assembly site"/>
    <property type="evidence" value="ECO:0000318"/>
    <property type="project" value="GO_Central"/>
</dbReference>
<dbReference type="GO" id="GO:0019778">
    <property type="term" value="F:Atg12 activating enzyme activity"/>
    <property type="evidence" value="ECO:0000318"/>
    <property type="project" value="GO_Central"/>
</dbReference>
<dbReference type="GO" id="GO:0019779">
    <property type="term" value="F:Atg8 activating enzyme activity"/>
    <property type="evidence" value="ECO:0000318"/>
    <property type="project" value="GO_Central"/>
</dbReference>
<dbReference type="GO" id="GO:0042802">
    <property type="term" value="F:identical protein binding"/>
    <property type="evidence" value="ECO:0007669"/>
    <property type="project" value="EnsemblFungi"/>
</dbReference>
<dbReference type="GO" id="GO:0000045">
    <property type="term" value="P:autophagosome assembly"/>
    <property type="evidence" value="ECO:0000318"/>
    <property type="project" value="GO_Central"/>
</dbReference>
<dbReference type="GO" id="GO:0006995">
    <property type="term" value="P:cellular response to nitrogen starvation"/>
    <property type="evidence" value="ECO:0000318"/>
    <property type="project" value="GO_Central"/>
</dbReference>
<dbReference type="GO" id="GO:0000423">
    <property type="term" value="P:mitophagy"/>
    <property type="evidence" value="ECO:0000318"/>
    <property type="project" value="GO_Central"/>
</dbReference>
<dbReference type="GO" id="GO:0034727">
    <property type="term" value="P:piecemeal microautophagy of the nucleus"/>
    <property type="evidence" value="ECO:0000318"/>
    <property type="project" value="GO_Central"/>
</dbReference>
<dbReference type="GO" id="GO:0032446">
    <property type="term" value="P:protein modification by small protein conjugation"/>
    <property type="evidence" value="ECO:0000318"/>
    <property type="project" value="GO_Central"/>
</dbReference>
<dbReference type="GO" id="GO:0015031">
    <property type="term" value="P:protein transport"/>
    <property type="evidence" value="ECO:0007669"/>
    <property type="project" value="UniProtKB-KW"/>
</dbReference>
<dbReference type="CDD" id="cd01486">
    <property type="entry name" value="Apg7"/>
    <property type="match status" value="1"/>
</dbReference>
<dbReference type="FunFam" id="3.40.50.720:FF:000243">
    <property type="entry name" value="Ubiquitin-like modifier-activating enzyme ATG7"/>
    <property type="match status" value="1"/>
</dbReference>
<dbReference type="Gene3D" id="3.40.50.720">
    <property type="entry name" value="NAD(P)-binding Rossmann-like Domain"/>
    <property type="match status" value="1"/>
</dbReference>
<dbReference type="Gene3D" id="3.40.140.100">
    <property type="entry name" value="Ubiquitin-like modifier-activating enzyme ATG7 C-terminal domain"/>
    <property type="match status" value="1"/>
</dbReference>
<dbReference type="Gene3D" id="3.40.140.70">
    <property type="entry name" value="Ubiquitin-like modifier-activating enzyme ATG7 N-terminal domain"/>
    <property type="match status" value="1"/>
</dbReference>
<dbReference type="InterPro" id="IPR006285">
    <property type="entry name" value="Atg7"/>
</dbReference>
<dbReference type="InterPro" id="IPR032197">
    <property type="entry name" value="Atg7_N"/>
</dbReference>
<dbReference type="InterPro" id="IPR042522">
    <property type="entry name" value="Atg7_N_1"/>
</dbReference>
<dbReference type="InterPro" id="IPR042523">
    <property type="entry name" value="Atg7_N_2"/>
</dbReference>
<dbReference type="InterPro" id="IPR045886">
    <property type="entry name" value="ThiF/MoeB/HesA"/>
</dbReference>
<dbReference type="InterPro" id="IPR000594">
    <property type="entry name" value="ThiF_NAD_FAD-bd"/>
</dbReference>
<dbReference type="InterPro" id="IPR035985">
    <property type="entry name" value="Ubiquitin-activating_enz"/>
</dbReference>
<dbReference type="NCBIfam" id="TIGR01381">
    <property type="entry name" value="E1_like_apg7"/>
    <property type="match status" value="1"/>
</dbReference>
<dbReference type="PANTHER" id="PTHR10953">
    <property type="entry name" value="UBIQUITIN-ACTIVATING ENZYME E1"/>
    <property type="match status" value="1"/>
</dbReference>
<dbReference type="PANTHER" id="PTHR10953:SF3">
    <property type="entry name" value="UBIQUITIN-LIKE MODIFIER-ACTIVATING ENZYME ATG7"/>
    <property type="match status" value="1"/>
</dbReference>
<dbReference type="Pfam" id="PF16420">
    <property type="entry name" value="ATG7_N"/>
    <property type="match status" value="1"/>
</dbReference>
<dbReference type="Pfam" id="PF00899">
    <property type="entry name" value="ThiF"/>
    <property type="match status" value="1"/>
</dbReference>
<dbReference type="SUPFAM" id="SSF69572">
    <property type="entry name" value="Activating enzymes of the ubiquitin-like proteins"/>
    <property type="match status" value="1"/>
</dbReference>
<name>ATG7_CRYNJ</name>
<evidence type="ECO:0000250" key="1"/>
<evidence type="ECO:0000256" key="2">
    <source>
        <dbReference type="SAM" id="MobiDB-lite"/>
    </source>
</evidence>
<evidence type="ECO:0000305" key="3"/>
<feature type="chain" id="PRO_0000212813" description="Ubiquitin-like modifier-activating enzyme ATG7">
    <location>
        <begin position="1"/>
        <end position="675"/>
    </location>
</feature>
<feature type="region of interest" description="Disordered" evidence="2">
    <location>
        <begin position="268"/>
        <end position="293"/>
    </location>
</feature>
<feature type="short sequence motif" description="GXGXXG motif">
    <location>
        <begin position="346"/>
        <end position="351"/>
    </location>
</feature>
<feature type="active site" description="Glycyl thioester intermediate" evidence="1">
    <location>
        <position position="538"/>
    </location>
</feature>
<sequence>MAPLQFQPLASQPTPAFWAALAAHKLNHLKLDDSHLPITAQIEPAKRVLINKERVDDTADVGIDGSLVVGGDAFEAERGRLPPNAVSVTGTLKIFNTIEEFKDTSAKKRLFDDLVSQMLESFDTDRPVLNPFLLVTFADLKKYVYHYWFAFPALVSSPAWVMDGEFMPVDEIEDIRKLAQSHFQHNTTAFLLKGAAPHLSAAPLSSCSTFYDKTQSEMVTVVFHDTSSLPSNPGWGLRNVLYYLSAKHGITSLVVICLREGSSSTQASLSLSSPPSTAPAKPPQAVGWERHPSGKLSPRVADLGPMMDPTRLAAQAVDLNLKLIKWRLLPALDLDKISGTRCLLLGAGTLGCYVARILMGWGVRNITLVDSSTVSYSNPVRQPLFTFSDCLNGGLPKAPTAAKKLQEIFPGVNAQGVVLGIPMPGHPISSSDDAVEKDVAKLEALVKSHDAVFLLMDSRESRWLPTVLGRKWGKVVVNAALGFDSFLVMRHGAGAGAGARRIQSDEGGVGEKGLGCYYCNDIVAPTDSLSDRTLDQMCTVTRPGVAPIAAAMAVELLISVLQHPLGVHAPAERPDTAETSTSTKTSPLGCVPHQLRGQMYQWKTQIVEGEAFDRCTGCSDYVLNEYETNGFAFLRRVFNEKDYLEKVTGLDELYRESEKVIEGMEGLDWDSEGEE</sequence>
<reference key="1">
    <citation type="journal article" date="2005" name="Science">
        <title>The genome of the basidiomycetous yeast and human pathogen Cryptococcus neoformans.</title>
        <authorList>
            <person name="Loftus B.J."/>
            <person name="Fung E."/>
            <person name="Roncaglia P."/>
            <person name="Rowley D."/>
            <person name="Amedeo P."/>
            <person name="Bruno D."/>
            <person name="Vamathevan J."/>
            <person name="Miranda M."/>
            <person name="Anderson I.J."/>
            <person name="Fraser J.A."/>
            <person name="Allen J.E."/>
            <person name="Bosdet I.E."/>
            <person name="Brent M.R."/>
            <person name="Chiu R."/>
            <person name="Doering T.L."/>
            <person name="Donlin M.J."/>
            <person name="D'Souza C.A."/>
            <person name="Fox D.S."/>
            <person name="Grinberg V."/>
            <person name="Fu J."/>
            <person name="Fukushima M."/>
            <person name="Haas B.J."/>
            <person name="Huang J.C."/>
            <person name="Janbon G."/>
            <person name="Jones S.J.M."/>
            <person name="Koo H.L."/>
            <person name="Krzywinski M.I."/>
            <person name="Kwon-Chung K.J."/>
            <person name="Lengeler K.B."/>
            <person name="Maiti R."/>
            <person name="Marra M.A."/>
            <person name="Marra R.E."/>
            <person name="Mathewson C.A."/>
            <person name="Mitchell T.G."/>
            <person name="Pertea M."/>
            <person name="Riggs F.R."/>
            <person name="Salzberg S.L."/>
            <person name="Schein J.E."/>
            <person name="Shvartsbeyn A."/>
            <person name="Shin H."/>
            <person name="Shumway M."/>
            <person name="Specht C.A."/>
            <person name="Suh B.B."/>
            <person name="Tenney A."/>
            <person name="Utterback T.R."/>
            <person name="Wickes B.L."/>
            <person name="Wortman J.R."/>
            <person name="Wye N.H."/>
            <person name="Kronstad J.W."/>
            <person name="Lodge J.K."/>
            <person name="Heitman J."/>
            <person name="Davis R.W."/>
            <person name="Fraser C.M."/>
            <person name="Hyman R.W."/>
        </authorList>
    </citation>
    <scope>NUCLEOTIDE SEQUENCE [LARGE SCALE GENOMIC DNA]</scope>
    <source>
        <strain>JEC21 / ATCC MYA-565</strain>
    </source>
</reference>
<gene>
    <name type="primary">ATG7</name>
    <name type="ordered locus">CNI00160</name>
</gene>
<keyword id="KW-0072">Autophagy</keyword>
<keyword id="KW-0963">Cytoplasm</keyword>
<keyword id="KW-0653">Protein transport</keyword>
<keyword id="KW-1185">Reference proteome</keyword>
<keyword id="KW-0813">Transport</keyword>
<keyword id="KW-0833">Ubl conjugation pathway</keyword>